<comment type="function">
    <text evidence="1 3">Specifically acetylates 'Lys-40' in alpha-tubulin on the lumenal side of microtubules (By similarity) (PubMed:36302967). Promotes microtubule destabilization and accelerates microtubule dynamics; this activity may be independent of acetylation activity. Acetylates alpha-tubulin with a slow enzymatic rate, due to a catalytic site that is not optimized for acetyl transfer. Enters the microtubule through each end and diffuses quickly throughout the lumen of microtubules. Acetylates only long/old microtubules because of its slow acetylation rate since it does not have time to act on dynamically unstable microtubules before the enzyme is released (By similarity). Acetylates central spindle microtubules (PubMed:36302967).</text>
</comment>
<comment type="catalytic activity">
    <reaction evidence="1 3">
        <text>L-lysyl-[alpha-tubulin] + acetyl-CoA = N(6)-acetyl-L-lysyl-[alpha-tubulin] + CoA + H(+)</text>
        <dbReference type="Rhea" id="RHEA:15277"/>
        <dbReference type="Rhea" id="RHEA-COMP:11278"/>
        <dbReference type="Rhea" id="RHEA-COMP:11279"/>
        <dbReference type="ChEBI" id="CHEBI:15378"/>
        <dbReference type="ChEBI" id="CHEBI:29969"/>
        <dbReference type="ChEBI" id="CHEBI:57287"/>
        <dbReference type="ChEBI" id="CHEBI:57288"/>
        <dbReference type="ChEBI" id="CHEBI:61930"/>
        <dbReference type="EC" id="2.3.1.108"/>
    </reaction>
</comment>
<comment type="alternative products">
    <event type="alternative splicing"/>
    <isoform>
        <id>Q9VSY4-1</id>
        <name>1</name>
        <sequence type="displayed"/>
    </isoform>
    <isoform>
        <id>Q9VSY4-2</id>
        <name>2</name>
        <sequence type="described" ref="VSP_035094"/>
    </isoform>
</comment>
<comment type="similarity">
    <text evidence="1">Belongs to the acetyltransferase ATAT1 family.</text>
</comment>
<sequence length="461" mass="50560">MVEFRFDIKPLFAQPIIKVTSNLLPNTFRGDRRQCLDATSKMTEIIDQLGQLSATSQGLSKPVTTAQRLRMSDNQTIYLLADNEAGHNGAVLGLLKVGTKNLYLFDEAGKTRMVEQTPSILDFYVHESRQRAGLGKRLFQTMLNEEQWTARKCSVDRPSEKLLSFLSKHYGLKRIIPQANNFVLYEGFFNDGESGNGGGNGHANGTPNGLHITNSPNTHLFGATYLGEDSNQRRGSQQQTTPNARLQQITQISPSGRYGAKRPTCSMAEIIHAGNSKGGNGNGSAEANSGNGNHDIPEIAEQLQRQSLADLEANSYEPEPEVEPEPEPEPEPEPEPEVITPPSPPPKSHTPTPPSVRSPEVAESIVGDNRRAPAFQLSKQHTGMKNRSFGVGMAVMPSSKMEFDQMEREDFGVVKINRPPGHEVTSPGQDNTDAMSTVSSGGGGLTDQGYYDLKFYHNKLW</sequence>
<evidence type="ECO:0000255" key="1">
    <source>
        <dbReference type="HAMAP-Rule" id="MF_03130"/>
    </source>
</evidence>
<evidence type="ECO:0000256" key="2">
    <source>
        <dbReference type="SAM" id="MobiDB-lite"/>
    </source>
</evidence>
<evidence type="ECO:0000269" key="3">
    <source>
    </source>
</evidence>
<evidence type="ECO:0000305" key="4"/>
<evidence type="ECO:0000312" key="5">
    <source>
        <dbReference type="FlyBase" id="FBgn0035989"/>
    </source>
</evidence>
<accession>Q9VSY4</accession>
<accession>Q95S14</accession>
<accession>Q9VSY5</accession>
<name>ATAT1_DROME</name>
<organism>
    <name type="scientific">Drosophila melanogaster</name>
    <name type="common">Fruit fly</name>
    <dbReference type="NCBI Taxonomy" id="7227"/>
    <lineage>
        <taxon>Eukaryota</taxon>
        <taxon>Metazoa</taxon>
        <taxon>Ecdysozoa</taxon>
        <taxon>Arthropoda</taxon>
        <taxon>Hexapoda</taxon>
        <taxon>Insecta</taxon>
        <taxon>Pterygota</taxon>
        <taxon>Neoptera</taxon>
        <taxon>Endopterygota</taxon>
        <taxon>Diptera</taxon>
        <taxon>Brachycera</taxon>
        <taxon>Muscomorpha</taxon>
        <taxon>Ephydroidea</taxon>
        <taxon>Drosophilidae</taxon>
        <taxon>Drosophila</taxon>
        <taxon>Sophophora</taxon>
    </lineage>
</organism>
<proteinExistence type="evidence at protein level"/>
<dbReference type="EC" id="2.3.1.108" evidence="1 3"/>
<dbReference type="EMBL" id="AE014296">
    <property type="protein sequence ID" value="AAF50275.2"/>
    <property type="molecule type" value="Genomic_DNA"/>
</dbReference>
<dbReference type="EMBL" id="AE014296">
    <property type="protein sequence ID" value="AAF50276.1"/>
    <property type="molecule type" value="Genomic_DNA"/>
</dbReference>
<dbReference type="EMBL" id="AE014296">
    <property type="protein sequence ID" value="AAN11967.1"/>
    <property type="molecule type" value="Genomic_DNA"/>
</dbReference>
<dbReference type="EMBL" id="AE014296">
    <property type="protein sequence ID" value="AAN11968.1"/>
    <property type="molecule type" value="Genomic_DNA"/>
</dbReference>
<dbReference type="EMBL" id="AE014296">
    <property type="protein sequence ID" value="AAN11969.1"/>
    <property type="molecule type" value="Genomic_DNA"/>
</dbReference>
<dbReference type="EMBL" id="AY061003">
    <property type="protein sequence ID" value="AAL28551.1"/>
    <property type="molecule type" value="mRNA"/>
</dbReference>
<dbReference type="RefSeq" id="NP_001261628.1">
    <molecule id="Q9VSY4-2"/>
    <property type="nucleotide sequence ID" value="NM_001274699.1"/>
</dbReference>
<dbReference type="RefSeq" id="NP_648309.1">
    <molecule id="Q9VSY4-1"/>
    <property type="nucleotide sequence ID" value="NM_140052.2"/>
</dbReference>
<dbReference type="RefSeq" id="NP_648310.1">
    <molecule id="Q9VSY4-1"/>
    <property type="nucleotide sequence ID" value="NM_140053.2"/>
</dbReference>
<dbReference type="RefSeq" id="NP_729487.1">
    <molecule id="Q9VSY4-1"/>
    <property type="nucleotide sequence ID" value="NM_170630.2"/>
</dbReference>
<dbReference type="RefSeq" id="NP_729488.1">
    <molecule id="Q9VSY4-1"/>
    <property type="nucleotide sequence ID" value="NM_170631.1"/>
</dbReference>
<dbReference type="RefSeq" id="NP_729489.1">
    <molecule id="Q9VSY4-2"/>
    <property type="nucleotide sequence ID" value="NM_170632.2"/>
</dbReference>
<dbReference type="SMR" id="Q9VSY4"/>
<dbReference type="BioGRID" id="64480">
    <property type="interactions" value="4"/>
</dbReference>
<dbReference type="FunCoup" id="Q9VSY4">
    <property type="interactions" value="29"/>
</dbReference>
<dbReference type="IntAct" id="Q9VSY4">
    <property type="interactions" value="1"/>
</dbReference>
<dbReference type="STRING" id="7227.FBpp0076209"/>
<dbReference type="PaxDb" id="7227-FBpp0076209"/>
<dbReference type="DNASU" id="39086"/>
<dbReference type="EnsemblMetazoa" id="FBtr0076480">
    <molecule id="Q9VSY4-2"/>
    <property type="protein sequence ID" value="FBpp0076208"/>
    <property type="gene ID" value="FBgn0035989"/>
</dbReference>
<dbReference type="EnsemblMetazoa" id="FBtr0076481">
    <molecule id="Q9VSY4-1"/>
    <property type="protein sequence ID" value="FBpp0076209"/>
    <property type="gene ID" value="FBgn0035989"/>
</dbReference>
<dbReference type="EnsemblMetazoa" id="FBtr0076482">
    <molecule id="Q9VSY4-1"/>
    <property type="protein sequence ID" value="FBpp0076210"/>
    <property type="gene ID" value="FBgn0035989"/>
</dbReference>
<dbReference type="EnsemblMetazoa" id="FBtr0076483">
    <molecule id="Q9VSY4-1"/>
    <property type="protein sequence ID" value="FBpp0076211"/>
    <property type="gene ID" value="FBgn0035989"/>
</dbReference>
<dbReference type="EnsemblMetazoa" id="FBtr0076484">
    <molecule id="Q9VSY4-1"/>
    <property type="protein sequence ID" value="FBpp0076212"/>
    <property type="gene ID" value="FBgn0035989"/>
</dbReference>
<dbReference type="EnsemblMetazoa" id="FBtr0331584">
    <molecule id="Q9VSY4-2"/>
    <property type="protein sequence ID" value="FBpp0303974"/>
    <property type="gene ID" value="FBgn0035989"/>
</dbReference>
<dbReference type="GeneID" id="39086"/>
<dbReference type="KEGG" id="dme:Dmel_CG3967"/>
<dbReference type="UCSC" id="CG3967-RA">
    <molecule id="Q9VSY4-1"/>
    <property type="organism name" value="d. melanogaster"/>
</dbReference>
<dbReference type="UCSC" id="CG3967-RB">
    <property type="organism name" value="d. melanogaster"/>
</dbReference>
<dbReference type="AGR" id="FB:FBgn0035989"/>
<dbReference type="CTD" id="39086"/>
<dbReference type="FlyBase" id="FBgn0035989">
    <property type="gene designation" value="Atat"/>
</dbReference>
<dbReference type="VEuPathDB" id="VectorBase:FBgn0035989"/>
<dbReference type="eggNOG" id="KOG4601">
    <property type="taxonomic scope" value="Eukaryota"/>
</dbReference>
<dbReference type="GeneTree" id="ENSGT00390000008276"/>
<dbReference type="HOGENOM" id="CLU_025013_4_1_1"/>
<dbReference type="InParanoid" id="Q9VSY4"/>
<dbReference type="OMA" id="YENNHAT"/>
<dbReference type="OrthoDB" id="447510at2759"/>
<dbReference type="PhylomeDB" id="Q9VSY4"/>
<dbReference type="BioGRID-ORCS" id="39086">
    <property type="hits" value="0 hits in 1 CRISPR screen"/>
</dbReference>
<dbReference type="ChiTaRS" id="CG3967">
    <property type="organism name" value="fly"/>
</dbReference>
<dbReference type="GenomeRNAi" id="39086"/>
<dbReference type="PRO" id="PR:Q9VSY4"/>
<dbReference type="Proteomes" id="UP000000803">
    <property type="component" value="Chromosome 3L"/>
</dbReference>
<dbReference type="Bgee" id="FBgn0035989">
    <property type="expression patterns" value="Expressed in early elongation stage spermatid (Drosophila) in testis and 215 other cell types or tissues"/>
</dbReference>
<dbReference type="ExpressionAtlas" id="Q9VSY4">
    <property type="expression patterns" value="baseline and differential"/>
</dbReference>
<dbReference type="GO" id="GO:0005874">
    <property type="term" value="C:microtubule"/>
    <property type="evidence" value="ECO:0007669"/>
    <property type="project" value="InterPro"/>
</dbReference>
<dbReference type="GO" id="GO:0019799">
    <property type="term" value="F:tubulin N-acetyltransferase activity"/>
    <property type="evidence" value="ECO:0000315"/>
    <property type="project" value="FlyBase"/>
</dbReference>
<dbReference type="GO" id="GO:0048149">
    <property type="term" value="P:behavioral response to ethanol"/>
    <property type="evidence" value="ECO:0000315"/>
    <property type="project" value="FlyBase"/>
</dbReference>
<dbReference type="GO" id="GO:0000226">
    <property type="term" value="P:microtubule cytoskeleton organization"/>
    <property type="evidence" value="ECO:0000318"/>
    <property type="project" value="GO_Central"/>
</dbReference>
<dbReference type="GO" id="GO:0048666">
    <property type="term" value="P:neuron development"/>
    <property type="evidence" value="ECO:0007669"/>
    <property type="project" value="UniProtKB-UniRule"/>
</dbReference>
<dbReference type="GO" id="GO:0070507">
    <property type="term" value="P:regulation of microtubule cytoskeleton organization"/>
    <property type="evidence" value="ECO:0007669"/>
    <property type="project" value="UniProtKB-UniRule"/>
</dbReference>
<dbReference type="CDD" id="cd04301">
    <property type="entry name" value="NAT_SF"/>
    <property type="match status" value="1"/>
</dbReference>
<dbReference type="FunFam" id="3.40.630.30:FF:000060">
    <property type="entry name" value="Alpha-tubulin N-acetyltransferase 1"/>
    <property type="match status" value="1"/>
</dbReference>
<dbReference type="Gene3D" id="3.40.630.30">
    <property type="match status" value="1"/>
</dbReference>
<dbReference type="HAMAP" id="MF_03130">
    <property type="entry name" value="mec17"/>
    <property type="match status" value="1"/>
</dbReference>
<dbReference type="InterPro" id="IPR038746">
    <property type="entry name" value="Atat"/>
</dbReference>
<dbReference type="InterPro" id="IPR007965">
    <property type="entry name" value="GNAT_ATAT"/>
</dbReference>
<dbReference type="PANTHER" id="PTHR12327">
    <property type="entry name" value="ALPHA-TUBULIN N-ACETYLTRANSFERASE 1"/>
    <property type="match status" value="1"/>
</dbReference>
<dbReference type="PANTHER" id="PTHR12327:SF0">
    <property type="entry name" value="ALPHA-TUBULIN N-ACETYLTRANSFERASE 1"/>
    <property type="match status" value="1"/>
</dbReference>
<dbReference type="Pfam" id="PF05301">
    <property type="entry name" value="Acetyltransf_16"/>
    <property type="match status" value="1"/>
</dbReference>
<dbReference type="PROSITE" id="PS51730">
    <property type="entry name" value="GNAT_ATAT"/>
    <property type="match status" value="1"/>
</dbReference>
<keyword id="KW-0012">Acyltransferase</keyword>
<keyword id="KW-0025">Alternative splicing</keyword>
<keyword id="KW-1185">Reference proteome</keyword>
<keyword id="KW-0808">Transferase</keyword>
<feature type="chain" id="PRO_0000348069" description="Alpha-tubulin N-acetyltransferase 1">
    <location>
        <begin position="1"/>
        <end position="461"/>
    </location>
</feature>
<feature type="domain" description="N-acetyltransferase" evidence="1">
    <location>
        <begin position="2"/>
        <end position="189"/>
    </location>
</feature>
<feature type="region of interest" description="Disordered" evidence="2">
    <location>
        <begin position="196"/>
        <end position="295"/>
    </location>
</feature>
<feature type="region of interest" description="Disordered" evidence="2">
    <location>
        <begin position="314"/>
        <end position="362"/>
    </location>
</feature>
<feature type="region of interest" description="Disordered" evidence="2">
    <location>
        <begin position="418"/>
        <end position="443"/>
    </location>
</feature>
<feature type="compositionally biased region" description="Polar residues" evidence="2">
    <location>
        <begin position="233"/>
        <end position="254"/>
    </location>
</feature>
<feature type="compositionally biased region" description="Low complexity" evidence="2">
    <location>
        <begin position="283"/>
        <end position="293"/>
    </location>
</feature>
<feature type="compositionally biased region" description="Acidic residues" evidence="2">
    <location>
        <begin position="318"/>
        <end position="336"/>
    </location>
</feature>
<feature type="compositionally biased region" description="Pro residues" evidence="2">
    <location>
        <begin position="339"/>
        <end position="356"/>
    </location>
</feature>
<feature type="compositionally biased region" description="Polar residues" evidence="2">
    <location>
        <begin position="426"/>
        <end position="439"/>
    </location>
</feature>
<feature type="binding site" evidence="1">
    <location>
        <begin position="123"/>
        <end position="136"/>
    </location>
    <ligand>
        <name>acetyl-CoA</name>
        <dbReference type="ChEBI" id="CHEBI:57288"/>
    </ligand>
</feature>
<feature type="binding site" evidence="1">
    <location>
        <begin position="159"/>
        <end position="168"/>
    </location>
    <ligand>
        <name>acetyl-CoA</name>
        <dbReference type="ChEBI" id="CHEBI:57288"/>
    </ligand>
</feature>
<feature type="site" description="Crucial for catalytic activity" evidence="1">
    <location>
        <position position="57"/>
    </location>
</feature>
<feature type="splice variant" id="VSP_035094" description="In isoform 2." evidence="4">
    <original>SGNGNHDIPEIAEQLQRQSLADLEANSYEPEPEVEPEPEPEPEPEPEPEVITPPSPPPKSHTPTPPSVRSPEVAESIVGDNRRAPAFQLSKQHTGMKNRSFGVGMAVMPSSKMEFDQMEREDFGVVKINRPPGHEVTSPGQDNTDAMSTVSSGGGGLTDQGYYDLKFYHNKLW</original>
    <variation>RIK</variation>
    <location>
        <begin position="289"/>
        <end position="461"/>
    </location>
</feature>
<reference key="1">
    <citation type="journal article" date="2000" name="Science">
        <title>The genome sequence of Drosophila melanogaster.</title>
        <authorList>
            <person name="Adams M.D."/>
            <person name="Celniker S.E."/>
            <person name="Holt R.A."/>
            <person name="Evans C.A."/>
            <person name="Gocayne J.D."/>
            <person name="Amanatides P.G."/>
            <person name="Scherer S.E."/>
            <person name="Li P.W."/>
            <person name="Hoskins R.A."/>
            <person name="Galle R.F."/>
            <person name="George R.A."/>
            <person name="Lewis S.E."/>
            <person name="Richards S."/>
            <person name="Ashburner M."/>
            <person name="Henderson S.N."/>
            <person name="Sutton G.G."/>
            <person name="Wortman J.R."/>
            <person name="Yandell M.D."/>
            <person name="Zhang Q."/>
            <person name="Chen L.X."/>
            <person name="Brandon R.C."/>
            <person name="Rogers Y.-H.C."/>
            <person name="Blazej R.G."/>
            <person name="Champe M."/>
            <person name="Pfeiffer B.D."/>
            <person name="Wan K.H."/>
            <person name="Doyle C."/>
            <person name="Baxter E.G."/>
            <person name="Helt G."/>
            <person name="Nelson C.R."/>
            <person name="Miklos G.L.G."/>
            <person name="Abril J.F."/>
            <person name="Agbayani A."/>
            <person name="An H.-J."/>
            <person name="Andrews-Pfannkoch C."/>
            <person name="Baldwin D."/>
            <person name="Ballew R.M."/>
            <person name="Basu A."/>
            <person name="Baxendale J."/>
            <person name="Bayraktaroglu L."/>
            <person name="Beasley E.M."/>
            <person name="Beeson K.Y."/>
            <person name="Benos P.V."/>
            <person name="Berman B.P."/>
            <person name="Bhandari D."/>
            <person name="Bolshakov S."/>
            <person name="Borkova D."/>
            <person name="Botchan M.R."/>
            <person name="Bouck J."/>
            <person name="Brokstein P."/>
            <person name="Brottier P."/>
            <person name="Burtis K.C."/>
            <person name="Busam D.A."/>
            <person name="Butler H."/>
            <person name="Cadieu E."/>
            <person name="Center A."/>
            <person name="Chandra I."/>
            <person name="Cherry J.M."/>
            <person name="Cawley S."/>
            <person name="Dahlke C."/>
            <person name="Davenport L.B."/>
            <person name="Davies P."/>
            <person name="de Pablos B."/>
            <person name="Delcher A."/>
            <person name="Deng Z."/>
            <person name="Mays A.D."/>
            <person name="Dew I."/>
            <person name="Dietz S.M."/>
            <person name="Dodson K."/>
            <person name="Doup L.E."/>
            <person name="Downes M."/>
            <person name="Dugan-Rocha S."/>
            <person name="Dunkov B.C."/>
            <person name="Dunn P."/>
            <person name="Durbin K.J."/>
            <person name="Evangelista C.C."/>
            <person name="Ferraz C."/>
            <person name="Ferriera S."/>
            <person name="Fleischmann W."/>
            <person name="Fosler C."/>
            <person name="Gabrielian A.E."/>
            <person name="Garg N.S."/>
            <person name="Gelbart W.M."/>
            <person name="Glasser K."/>
            <person name="Glodek A."/>
            <person name="Gong F."/>
            <person name="Gorrell J.H."/>
            <person name="Gu Z."/>
            <person name="Guan P."/>
            <person name="Harris M."/>
            <person name="Harris N.L."/>
            <person name="Harvey D.A."/>
            <person name="Heiman T.J."/>
            <person name="Hernandez J.R."/>
            <person name="Houck J."/>
            <person name="Hostin D."/>
            <person name="Houston K.A."/>
            <person name="Howland T.J."/>
            <person name="Wei M.-H."/>
            <person name="Ibegwam C."/>
            <person name="Jalali M."/>
            <person name="Kalush F."/>
            <person name="Karpen G.H."/>
            <person name="Ke Z."/>
            <person name="Kennison J.A."/>
            <person name="Ketchum K.A."/>
            <person name="Kimmel B.E."/>
            <person name="Kodira C.D."/>
            <person name="Kraft C.L."/>
            <person name="Kravitz S."/>
            <person name="Kulp D."/>
            <person name="Lai Z."/>
            <person name="Lasko P."/>
            <person name="Lei Y."/>
            <person name="Levitsky A.A."/>
            <person name="Li J.H."/>
            <person name="Li Z."/>
            <person name="Liang Y."/>
            <person name="Lin X."/>
            <person name="Liu X."/>
            <person name="Mattei B."/>
            <person name="McIntosh T.C."/>
            <person name="McLeod M.P."/>
            <person name="McPherson D."/>
            <person name="Merkulov G."/>
            <person name="Milshina N.V."/>
            <person name="Mobarry C."/>
            <person name="Morris J."/>
            <person name="Moshrefi A."/>
            <person name="Mount S.M."/>
            <person name="Moy M."/>
            <person name="Murphy B."/>
            <person name="Murphy L."/>
            <person name="Muzny D.M."/>
            <person name="Nelson D.L."/>
            <person name="Nelson D.R."/>
            <person name="Nelson K.A."/>
            <person name="Nixon K."/>
            <person name="Nusskern D.R."/>
            <person name="Pacleb J.M."/>
            <person name="Palazzolo M."/>
            <person name="Pittman G.S."/>
            <person name="Pan S."/>
            <person name="Pollard J."/>
            <person name="Puri V."/>
            <person name="Reese M.G."/>
            <person name="Reinert K."/>
            <person name="Remington K."/>
            <person name="Saunders R.D.C."/>
            <person name="Scheeler F."/>
            <person name="Shen H."/>
            <person name="Shue B.C."/>
            <person name="Siden-Kiamos I."/>
            <person name="Simpson M."/>
            <person name="Skupski M.P."/>
            <person name="Smith T.J."/>
            <person name="Spier E."/>
            <person name="Spradling A.C."/>
            <person name="Stapleton M."/>
            <person name="Strong R."/>
            <person name="Sun E."/>
            <person name="Svirskas R."/>
            <person name="Tector C."/>
            <person name="Turner R."/>
            <person name="Venter E."/>
            <person name="Wang A.H."/>
            <person name="Wang X."/>
            <person name="Wang Z.-Y."/>
            <person name="Wassarman D.A."/>
            <person name="Weinstock G.M."/>
            <person name="Weissenbach J."/>
            <person name="Williams S.M."/>
            <person name="Woodage T."/>
            <person name="Worley K.C."/>
            <person name="Wu D."/>
            <person name="Yang S."/>
            <person name="Yao Q.A."/>
            <person name="Ye J."/>
            <person name="Yeh R.-F."/>
            <person name="Zaveri J.S."/>
            <person name="Zhan M."/>
            <person name="Zhang G."/>
            <person name="Zhao Q."/>
            <person name="Zheng L."/>
            <person name="Zheng X.H."/>
            <person name="Zhong F.N."/>
            <person name="Zhong W."/>
            <person name="Zhou X."/>
            <person name="Zhu S.C."/>
            <person name="Zhu X."/>
            <person name="Smith H.O."/>
            <person name="Gibbs R.A."/>
            <person name="Myers E.W."/>
            <person name="Rubin G.M."/>
            <person name="Venter J.C."/>
        </authorList>
    </citation>
    <scope>NUCLEOTIDE SEQUENCE [LARGE SCALE GENOMIC DNA]</scope>
    <source>
        <strain>Berkeley</strain>
    </source>
</reference>
<reference key="2">
    <citation type="journal article" date="2002" name="Genome Biol.">
        <title>Annotation of the Drosophila melanogaster euchromatic genome: a systematic review.</title>
        <authorList>
            <person name="Misra S."/>
            <person name="Crosby M.A."/>
            <person name="Mungall C.J."/>
            <person name="Matthews B.B."/>
            <person name="Campbell K.S."/>
            <person name="Hradecky P."/>
            <person name="Huang Y."/>
            <person name="Kaminker J.S."/>
            <person name="Millburn G.H."/>
            <person name="Prochnik S.E."/>
            <person name="Smith C.D."/>
            <person name="Tupy J.L."/>
            <person name="Whitfield E.J."/>
            <person name="Bayraktaroglu L."/>
            <person name="Berman B.P."/>
            <person name="Bettencourt B.R."/>
            <person name="Celniker S.E."/>
            <person name="de Grey A.D.N.J."/>
            <person name="Drysdale R.A."/>
            <person name="Harris N.L."/>
            <person name="Richter J."/>
            <person name="Russo S."/>
            <person name="Schroeder A.J."/>
            <person name="Shu S.Q."/>
            <person name="Stapleton M."/>
            <person name="Yamada C."/>
            <person name="Ashburner M."/>
            <person name="Gelbart W.M."/>
            <person name="Rubin G.M."/>
            <person name="Lewis S.E."/>
        </authorList>
    </citation>
    <scope>GENOME REANNOTATION</scope>
    <scope>ALTERNATIVE SPLICING</scope>
    <source>
        <strain>Berkeley</strain>
    </source>
</reference>
<reference key="3">
    <citation type="journal article" date="2002" name="Genome Biol.">
        <title>A Drosophila full-length cDNA resource.</title>
        <authorList>
            <person name="Stapleton M."/>
            <person name="Carlson J.W."/>
            <person name="Brokstein P."/>
            <person name="Yu C."/>
            <person name="Champe M."/>
            <person name="George R.A."/>
            <person name="Guarin H."/>
            <person name="Kronmiller B."/>
            <person name="Pacleb J.M."/>
            <person name="Park S."/>
            <person name="Wan K.H."/>
            <person name="Rubin G.M."/>
            <person name="Celniker S.E."/>
        </authorList>
    </citation>
    <scope>NUCLEOTIDE SEQUENCE [LARGE SCALE MRNA] (ISOFORM 1)</scope>
    <source>
        <strain>Berkeley</strain>
        <tissue>Head</tissue>
    </source>
</reference>
<reference key="4">
    <citation type="journal article" date="2022" name="Nat. Cell Biol.">
        <title>Elongator stabilizes microtubules to control central spindle asymmetry and polarized trafficking of cell fate determinants.</title>
        <authorList>
            <person name="Planelles-Herrero V.J."/>
            <person name="Bittleston A."/>
            <person name="Seum C."/>
            <person name="Daeden A."/>
            <person name="Gaitan M.G."/>
            <person name="Derivery E."/>
        </authorList>
    </citation>
    <scope>FUNCTION</scope>
    <scope>CATALYTIC ACTIVITY</scope>
</reference>
<protein>
    <recommendedName>
        <fullName evidence="1">Alpha-tubulin N-acetyltransferase 1</fullName>
        <shortName evidence="1">Alpha-TAT 1</shortName>
        <shortName evidence="1">TAT 1</shortName>
        <ecNumber evidence="1 3">2.3.1.108</ecNumber>
    </recommendedName>
    <alternativeName>
        <fullName evidence="1">Acetyltransferase mec-17 homolog 1</fullName>
    </alternativeName>
</protein>
<gene>
    <name evidence="5" type="primary">Atat</name>
    <name evidence="5" type="ORF">CG3967</name>
</gene>